<protein>
    <recommendedName>
        <fullName>Flagellar biosynthetic protein FliU</fullName>
    </recommendedName>
</protein>
<proteinExistence type="evidence at protein level"/>
<dbReference type="EMBL" id="L06520">
    <property type="protein sequence ID" value="AAA27106.1"/>
    <property type="molecule type" value="Genomic_DNA"/>
</dbReference>
<dbReference type="GO" id="GO:0044781">
    <property type="term" value="P:bacterial-type flagellum organization"/>
    <property type="evidence" value="ECO:0007669"/>
    <property type="project" value="UniProtKB-KW"/>
</dbReference>
<dbReference type="NCBIfam" id="NF038110">
    <property type="entry name" value="Lys_methyl_FliB"/>
    <property type="match status" value="1"/>
</dbReference>
<sequence>MKEITVTEPAFVTHFSCSGSACSDHCCKGWKITLDKTTVKKYLASKDATIRTIAQDNIILLKKNNSHWGEIKLPSALGNCPYLDEDRLCRVQKTLGAKALSHTCSSFPRAHHTYKNEVRNSLSLACPEVTSRILNDPDAMALGEKKSFSRHSILRRYFQRSKSYSICFA</sequence>
<name>FLIU_SALMU</name>
<accession>P37587</accession>
<reference key="1">
    <citation type="journal article" date="1993" name="Gene">
        <title>Cloning and sequencing of two new fli genes, the products of which are essential for Salmonella flagellar biosynthesis.</title>
        <authorList>
            <person name="Doll L."/>
            <person name="Frankel G."/>
        </authorList>
    </citation>
    <scope>NUCLEOTIDE SEQUENCE [GENOMIC DNA]</scope>
    <source>
        <strain>ATCC 8388</strain>
    </source>
</reference>
<reference key="2">
    <citation type="journal article" date="1993" name="J. Gen. Microbiol.">
        <title>fliU and fliV: two flagellar genes essential for biosynthesis of Salmonella and Escherichia coli flagella.</title>
        <authorList>
            <person name="Doll L."/>
            <person name="Frankel G."/>
        </authorList>
    </citation>
    <scope>CHARACTERIZATION</scope>
</reference>
<organism>
    <name type="scientific">Salmonella muenchen</name>
    <dbReference type="NCBI Taxonomy" id="596"/>
    <lineage>
        <taxon>Bacteria</taxon>
        <taxon>Pseudomonadati</taxon>
        <taxon>Pseudomonadota</taxon>
        <taxon>Gammaproteobacteria</taxon>
        <taxon>Enterobacterales</taxon>
        <taxon>Enterobacteriaceae</taxon>
        <taxon>Salmonella</taxon>
    </lineage>
</organism>
<feature type="chain" id="PRO_0000219868" description="Flagellar biosynthetic protein FliU">
    <location>
        <begin position="1"/>
        <end position="169"/>
    </location>
</feature>
<gene>
    <name type="primary">fliU</name>
</gene>
<evidence type="ECO:0000305" key="1"/>
<keyword id="KW-1005">Bacterial flagellum biogenesis</keyword>
<comment type="function">
    <text>Required for the secretion of flagellin and expression of motility.</text>
</comment>
<comment type="similarity">
    <text evidence="1">Belongs to the FliB family.</text>
</comment>
<comment type="caution">
    <text evidence="1">Corresponds to the N-terminal section. Unlike the other Salmonellae, the ortholog of the FliB protein may be encoded by two CDS in S.muenchen. It cannot be ruled out that sequencing errors produced two CDS instead of one.</text>
</comment>